<organism>
    <name type="scientific">Aquifex aeolicus (strain VF5)</name>
    <dbReference type="NCBI Taxonomy" id="224324"/>
    <lineage>
        <taxon>Bacteria</taxon>
        <taxon>Pseudomonadati</taxon>
        <taxon>Aquificota</taxon>
        <taxon>Aquificia</taxon>
        <taxon>Aquificales</taxon>
        <taxon>Aquificaceae</taxon>
        <taxon>Aquifex</taxon>
    </lineage>
</organism>
<comment type="function">
    <text evidence="1">DNA-dependent ATPase involved in processing of recombination intermediates, plays a role in repairing DNA breaks. Stimulates the branch migration of RecA-mediated strand transfer reactions, allowing the 3' invading strand to extend heteroduplex DNA faster. Binds ssDNA in the presence of ADP but not other nucleotides, has ATPase activity that is stimulated by ssDNA and various branched DNA structures, but inhibited by SSB. Does not have RecA's homology-searching function.</text>
</comment>
<comment type="domain">
    <text evidence="1">Has a putative N-terminal zinc-finger, a middle region with homology to RecA with ATPase motifs including the RadA KNRFG motif, while the C-terminus is homologous to Lon protease.</text>
</comment>
<comment type="similarity">
    <text evidence="1">Belongs to the RecA family. RadA subfamily.</text>
</comment>
<dbReference type="EC" id="3.6.4.-" evidence="1"/>
<dbReference type="EMBL" id="AE000657">
    <property type="protein sequence ID" value="AAC06790.1"/>
    <property type="molecule type" value="Genomic_DNA"/>
</dbReference>
<dbReference type="PIR" id="G70349">
    <property type="entry name" value="G70349"/>
</dbReference>
<dbReference type="RefSeq" id="NP_213387.1">
    <property type="nucleotide sequence ID" value="NC_000918.1"/>
</dbReference>
<dbReference type="RefSeq" id="WP_010880325.1">
    <property type="nucleotide sequence ID" value="NC_000918.1"/>
</dbReference>
<dbReference type="SMR" id="O66827"/>
<dbReference type="FunCoup" id="O66827">
    <property type="interactions" value="309"/>
</dbReference>
<dbReference type="STRING" id="224324.aq_552"/>
<dbReference type="EnsemblBacteria" id="AAC06790">
    <property type="protein sequence ID" value="AAC06790"/>
    <property type="gene ID" value="aq_552"/>
</dbReference>
<dbReference type="KEGG" id="aae:aq_552"/>
<dbReference type="PATRIC" id="fig|224324.8.peg.453"/>
<dbReference type="eggNOG" id="COG1066">
    <property type="taxonomic scope" value="Bacteria"/>
</dbReference>
<dbReference type="HOGENOM" id="CLU_018264_0_1_0"/>
<dbReference type="InParanoid" id="O66827"/>
<dbReference type="OrthoDB" id="9803906at2"/>
<dbReference type="Proteomes" id="UP000000798">
    <property type="component" value="Chromosome"/>
</dbReference>
<dbReference type="GO" id="GO:0005524">
    <property type="term" value="F:ATP binding"/>
    <property type="evidence" value="ECO:0007669"/>
    <property type="project" value="UniProtKB-UniRule"/>
</dbReference>
<dbReference type="GO" id="GO:0016887">
    <property type="term" value="F:ATP hydrolysis activity"/>
    <property type="evidence" value="ECO:0007669"/>
    <property type="project" value="InterPro"/>
</dbReference>
<dbReference type="GO" id="GO:0140664">
    <property type="term" value="F:ATP-dependent DNA damage sensor activity"/>
    <property type="evidence" value="ECO:0007669"/>
    <property type="project" value="InterPro"/>
</dbReference>
<dbReference type="GO" id="GO:0003684">
    <property type="term" value="F:damaged DNA binding"/>
    <property type="evidence" value="ECO:0007669"/>
    <property type="project" value="InterPro"/>
</dbReference>
<dbReference type="GO" id="GO:0008270">
    <property type="term" value="F:zinc ion binding"/>
    <property type="evidence" value="ECO:0007669"/>
    <property type="project" value="UniProtKB-KW"/>
</dbReference>
<dbReference type="GO" id="GO:0000725">
    <property type="term" value="P:recombinational repair"/>
    <property type="evidence" value="ECO:0000318"/>
    <property type="project" value="GO_Central"/>
</dbReference>
<dbReference type="CDD" id="cd01121">
    <property type="entry name" value="RadA_SMS_N"/>
    <property type="match status" value="1"/>
</dbReference>
<dbReference type="FunFam" id="3.40.50.300:FF:000050">
    <property type="entry name" value="DNA repair protein RadA"/>
    <property type="match status" value="1"/>
</dbReference>
<dbReference type="Gene3D" id="3.30.230.10">
    <property type="match status" value="1"/>
</dbReference>
<dbReference type="Gene3D" id="3.40.50.300">
    <property type="entry name" value="P-loop containing nucleotide triphosphate hydrolases"/>
    <property type="match status" value="1"/>
</dbReference>
<dbReference type="HAMAP" id="MF_01498">
    <property type="entry name" value="RadA_bact"/>
    <property type="match status" value="1"/>
</dbReference>
<dbReference type="InterPro" id="IPR003593">
    <property type="entry name" value="AAA+_ATPase"/>
</dbReference>
<dbReference type="InterPro" id="IPR004504">
    <property type="entry name" value="DNA_repair_RadA"/>
</dbReference>
<dbReference type="InterPro" id="IPR027417">
    <property type="entry name" value="P-loop_NTPase"/>
</dbReference>
<dbReference type="InterPro" id="IPR020588">
    <property type="entry name" value="RecA_ATP-bd"/>
</dbReference>
<dbReference type="InterPro" id="IPR020568">
    <property type="entry name" value="Ribosomal_Su5_D2-typ_SF"/>
</dbReference>
<dbReference type="InterPro" id="IPR014721">
    <property type="entry name" value="Ribsml_uS5_D2-typ_fold_subgr"/>
</dbReference>
<dbReference type="InterPro" id="IPR041166">
    <property type="entry name" value="Rubredoxin_2"/>
</dbReference>
<dbReference type="NCBIfam" id="TIGR00416">
    <property type="entry name" value="sms"/>
    <property type="match status" value="1"/>
</dbReference>
<dbReference type="PANTHER" id="PTHR32472">
    <property type="entry name" value="DNA REPAIR PROTEIN RADA"/>
    <property type="match status" value="1"/>
</dbReference>
<dbReference type="PANTHER" id="PTHR32472:SF10">
    <property type="entry name" value="DNA REPAIR PROTEIN RADA-LIKE PROTEIN"/>
    <property type="match status" value="1"/>
</dbReference>
<dbReference type="Pfam" id="PF13481">
    <property type="entry name" value="AAA_25"/>
    <property type="match status" value="1"/>
</dbReference>
<dbReference type="Pfam" id="PF13541">
    <property type="entry name" value="ChlI"/>
    <property type="match status" value="1"/>
</dbReference>
<dbReference type="Pfam" id="PF18073">
    <property type="entry name" value="Zn_ribbon_LapB"/>
    <property type="match status" value="1"/>
</dbReference>
<dbReference type="PRINTS" id="PR01874">
    <property type="entry name" value="DNAREPAIRADA"/>
</dbReference>
<dbReference type="SMART" id="SM00382">
    <property type="entry name" value="AAA"/>
    <property type="match status" value="1"/>
</dbReference>
<dbReference type="SUPFAM" id="SSF52540">
    <property type="entry name" value="P-loop containing nucleoside triphosphate hydrolases"/>
    <property type="match status" value="1"/>
</dbReference>
<dbReference type="SUPFAM" id="SSF54211">
    <property type="entry name" value="Ribosomal protein S5 domain 2-like"/>
    <property type="match status" value="1"/>
</dbReference>
<dbReference type="PROSITE" id="PS50162">
    <property type="entry name" value="RECA_2"/>
    <property type="match status" value="1"/>
</dbReference>
<evidence type="ECO:0000255" key="1">
    <source>
        <dbReference type="HAMAP-Rule" id="MF_01498"/>
    </source>
</evidence>
<sequence>MGKNKTAYVCQECGYKSVKWLGKCPSCGEWNTLVEEFEPQSFSLVKKEPSLVLPVTDWEKEEHERETTGFESLDNALGGGLVKGQVILIAGEPGIGKSTLLLQISDRVANGKKVLYVSGEESGTQIALRAKRLGINNENLLVYPEVNLEKILQTLEKEKPSLLVLDSVQTIFSERLESSAGSVSQVREVTYRITEFCKEKNVPAFIVGQITKEGSIAGPKVLEHIVDTVLQFEGERFNFYRIVKVIKNRFGSTGEIAVFKMTDKGLEEVPEPSAFFISEKANAPGSVVFPHTEGSKPVLLEVQALVIPALYTTPQRRTQGFDPNRLALILAVLEKEAKIFTRDQDVFVNVAGGMSVKEPAADLAVAMAVVSSKKEKEVPKDFVIFGEVGLSGEIRAVHFGDLRLKEAKRFGFKKALIPKSLEIEIDGMEIYPVSHIQEAIEVLF</sequence>
<gene>
    <name evidence="1" type="primary">radA</name>
    <name type="synonym">sms</name>
    <name type="ordered locus">aq_552</name>
</gene>
<reference key="1">
    <citation type="journal article" date="1998" name="Nature">
        <title>The complete genome of the hyperthermophilic bacterium Aquifex aeolicus.</title>
        <authorList>
            <person name="Deckert G."/>
            <person name="Warren P.V."/>
            <person name="Gaasterland T."/>
            <person name="Young W.G."/>
            <person name="Lenox A.L."/>
            <person name="Graham D.E."/>
            <person name="Overbeek R."/>
            <person name="Snead M.A."/>
            <person name="Keller M."/>
            <person name="Aujay M."/>
            <person name="Huber R."/>
            <person name="Feldman R.A."/>
            <person name="Short J.M."/>
            <person name="Olsen G.J."/>
            <person name="Swanson R.V."/>
        </authorList>
    </citation>
    <scope>NUCLEOTIDE SEQUENCE [LARGE SCALE GENOMIC DNA]</scope>
    <source>
        <strain>VF5</strain>
    </source>
</reference>
<accession>O66827</accession>
<feature type="chain" id="PRO_0000187919" description="DNA repair protein RadA">
    <location>
        <begin position="1"/>
        <end position="444"/>
    </location>
</feature>
<feature type="zinc finger region" description="C4-type" evidence="1">
    <location>
        <begin position="10"/>
        <end position="27"/>
    </location>
</feature>
<feature type="region of interest" description="Lon-protease-like" evidence="1">
    <location>
        <begin position="345"/>
        <end position="444"/>
    </location>
</feature>
<feature type="short sequence motif" description="RadA KNRFG motif" evidence="1">
    <location>
        <begin position="247"/>
        <end position="251"/>
    </location>
</feature>
<feature type="binding site" evidence="1">
    <location>
        <begin position="91"/>
        <end position="98"/>
    </location>
    <ligand>
        <name>ATP</name>
        <dbReference type="ChEBI" id="CHEBI:30616"/>
    </ligand>
</feature>
<keyword id="KW-0067">ATP-binding</keyword>
<keyword id="KW-0227">DNA damage</keyword>
<keyword id="KW-0234">DNA repair</keyword>
<keyword id="KW-0238">DNA-binding</keyword>
<keyword id="KW-0378">Hydrolase</keyword>
<keyword id="KW-0479">Metal-binding</keyword>
<keyword id="KW-0547">Nucleotide-binding</keyword>
<keyword id="KW-1185">Reference proteome</keyword>
<keyword id="KW-0346">Stress response</keyword>
<keyword id="KW-0862">Zinc</keyword>
<keyword id="KW-0863">Zinc-finger</keyword>
<name>RADA_AQUAE</name>
<protein>
    <recommendedName>
        <fullName evidence="1">DNA repair protein RadA</fullName>
        <ecNumber evidence="1">3.6.4.-</ecNumber>
    </recommendedName>
    <alternativeName>
        <fullName evidence="1">Branch migration protein RadA</fullName>
    </alternativeName>
</protein>
<proteinExistence type="inferred from homology"/>